<proteinExistence type="inferred from homology"/>
<keyword id="KW-0413">Isomerase</keyword>
<name>UXAC_BRUME</name>
<reference key="1">
    <citation type="journal article" date="2002" name="Proc. Natl. Acad. Sci. U.S.A.">
        <title>The genome sequence of the facultative intracellular pathogen Brucella melitensis.</title>
        <authorList>
            <person name="DelVecchio V.G."/>
            <person name="Kapatral V."/>
            <person name="Redkar R.J."/>
            <person name="Patra G."/>
            <person name="Mujer C."/>
            <person name="Los T."/>
            <person name="Ivanova N."/>
            <person name="Anderson I."/>
            <person name="Bhattacharyya A."/>
            <person name="Lykidis A."/>
            <person name="Reznik G."/>
            <person name="Jablonski L."/>
            <person name="Larsen N."/>
            <person name="D'Souza M."/>
            <person name="Bernal A."/>
            <person name="Mazur M."/>
            <person name="Goltsman E."/>
            <person name="Selkov E."/>
            <person name="Elzer P.H."/>
            <person name="Hagius S."/>
            <person name="O'Callaghan D."/>
            <person name="Letesson J.-J."/>
            <person name="Haselkorn R."/>
            <person name="Kyrpides N.C."/>
            <person name="Overbeek R."/>
        </authorList>
    </citation>
    <scope>NUCLEOTIDE SEQUENCE [LARGE SCALE GENOMIC DNA]</scope>
    <source>
        <strain>ATCC 23456 / CCUG 17765 / NCTC 10094 / 16M</strain>
    </source>
</reference>
<organism>
    <name type="scientific">Brucella melitensis biotype 1 (strain ATCC 23456 / CCUG 17765 / NCTC 10094 / 16M)</name>
    <dbReference type="NCBI Taxonomy" id="224914"/>
    <lineage>
        <taxon>Bacteria</taxon>
        <taxon>Pseudomonadati</taxon>
        <taxon>Pseudomonadota</taxon>
        <taxon>Alphaproteobacteria</taxon>
        <taxon>Hyphomicrobiales</taxon>
        <taxon>Brucellaceae</taxon>
        <taxon>Brucella/Ochrobactrum group</taxon>
        <taxon>Brucella</taxon>
    </lineage>
</organism>
<accession>Q8YCQ2</accession>
<accession>Q8YCQ1</accession>
<evidence type="ECO:0000305" key="1"/>
<gene>
    <name type="primary">uxaC</name>
    <name type="ordered locus">BMEII0476/BMEII0477</name>
</gene>
<comment type="catalytic activity">
    <reaction>
        <text>D-glucuronate = D-fructuronate</text>
        <dbReference type="Rhea" id="RHEA:13049"/>
        <dbReference type="ChEBI" id="CHEBI:58720"/>
        <dbReference type="ChEBI" id="CHEBI:59863"/>
        <dbReference type="EC" id="5.3.1.12"/>
    </reaction>
</comment>
<comment type="catalytic activity">
    <reaction>
        <text>aldehydo-D-galacturonate = keto-D-tagaturonate</text>
        <dbReference type="Rhea" id="RHEA:27702"/>
        <dbReference type="ChEBI" id="CHEBI:12952"/>
        <dbReference type="ChEBI" id="CHEBI:17886"/>
        <dbReference type="EC" id="5.3.1.12"/>
    </reaction>
</comment>
<comment type="pathway">
    <text>Carbohydrate metabolism; pentose and glucuronate interconversion.</text>
</comment>
<comment type="similarity">
    <text evidence="1">Belongs to the metallo-dependent hydrolases superfamily. Uronate isomerase family.</text>
</comment>
<comment type="sequence caution" evidence="1">
    <conflict type="frameshift">
        <sequence resource="EMBL-CDS" id="AAL53719"/>
    </conflict>
</comment>
<feature type="chain" id="PRO_0000172764" description="Uronate isomerase">
    <location>
        <begin position="1"/>
        <end position="466"/>
    </location>
</feature>
<sequence length="466" mass="52700">MALNPDRLFSAEPGTREIARRLFASVEKLPIISPHGHTEPIWYARNEAFPDPASLFVKPDHYITRMLYSQGHSLESLGIASRDGRPSETDARKIWRLFATNWYLFRATPSRLWFEHAMETVFGITERLSQENADRIFDAIADQLTQPHMRPRALYDRFNIEAISTTDAATDPLIYHDEVIASGWHGRIIPAYRPDAAVDAGRPDFASEVEKLVGVAGTPLTWQGYLDAHRNRREYFKRRGATSSDHGHPTAQTADLSAGDASRLFDRVIKGNASTSDAEMFRAQMLTEMARMSIDDGLVMQIHPGSFRNHNPTVFERFGLDKGADIPRQTGFVDQLKPLLDAFGNDPRLTVILFTLDETALSRELAPLAGHYPALKLGPAWWFFDSPEGILRYRKLTTETAGFYNTVGFNDDTRAYLSIPARHDMARRVDCAYLAGLVADHRLEEDEAYEVAHDLAYRLAKQTYKL</sequence>
<dbReference type="EC" id="5.3.1.12"/>
<dbReference type="EMBL" id="AE008918">
    <property type="protein sequence ID" value="AAL53718.1"/>
    <property type="status" value="ALT_FRAME"/>
    <property type="molecule type" value="Genomic_DNA"/>
</dbReference>
<dbReference type="EMBL" id="AE008918">
    <property type="protein sequence ID" value="AAL53719.1"/>
    <property type="status" value="ALT_FRAME"/>
    <property type="molecule type" value="Genomic_DNA"/>
</dbReference>
<dbReference type="PIR" id="AC3569">
    <property type="entry name" value="AC3569"/>
</dbReference>
<dbReference type="PIR" id="AD3569">
    <property type="entry name" value="AD3569"/>
</dbReference>
<dbReference type="SMR" id="Q8YCQ2"/>
<dbReference type="KEGG" id="bme:BMEII0476"/>
<dbReference type="KEGG" id="bme:BMEII0477"/>
<dbReference type="eggNOG" id="COG1904">
    <property type="taxonomic scope" value="Bacteria"/>
</dbReference>
<dbReference type="UniPathway" id="UPA00246"/>
<dbReference type="Proteomes" id="UP000000419">
    <property type="component" value="Chromosome II"/>
</dbReference>
<dbReference type="GO" id="GO:0008880">
    <property type="term" value="F:glucuronate isomerase activity"/>
    <property type="evidence" value="ECO:0007669"/>
    <property type="project" value="UniProtKB-UniRule"/>
</dbReference>
<dbReference type="GO" id="GO:0019698">
    <property type="term" value="P:D-galacturonate catabolic process"/>
    <property type="evidence" value="ECO:0007669"/>
    <property type="project" value="TreeGrafter"/>
</dbReference>
<dbReference type="GO" id="GO:0042840">
    <property type="term" value="P:D-glucuronate catabolic process"/>
    <property type="evidence" value="ECO:0007669"/>
    <property type="project" value="TreeGrafter"/>
</dbReference>
<dbReference type="Gene3D" id="3.20.20.140">
    <property type="entry name" value="Metal-dependent hydrolases"/>
    <property type="match status" value="1"/>
</dbReference>
<dbReference type="Gene3D" id="1.10.2020.10">
    <property type="entry name" value="uronate isomerase, domain 2, chain A"/>
    <property type="match status" value="1"/>
</dbReference>
<dbReference type="HAMAP" id="MF_00675">
    <property type="entry name" value="UxaC"/>
    <property type="match status" value="1"/>
</dbReference>
<dbReference type="InterPro" id="IPR032466">
    <property type="entry name" value="Metal_Hydrolase"/>
</dbReference>
<dbReference type="InterPro" id="IPR003766">
    <property type="entry name" value="Uronate_isomerase"/>
</dbReference>
<dbReference type="NCBIfam" id="NF002794">
    <property type="entry name" value="PRK02925.1"/>
    <property type="match status" value="1"/>
</dbReference>
<dbReference type="PANTHER" id="PTHR30068">
    <property type="entry name" value="URONATE ISOMERASE"/>
    <property type="match status" value="1"/>
</dbReference>
<dbReference type="PANTHER" id="PTHR30068:SF4">
    <property type="entry name" value="URONATE ISOMERASE"/>
    <property type="match status" value="1"/>
</dbReference>
<dbReference type="Pfam" id="PF02614">
    <property type="entry name" value="UxaC"/>
    <property type="match status" value="1"/>
</dbReference>
<dbReference type="SUPFAM" id="SSF51556">
    <property type="entry name" value="Metallo-dependent hydrolases"/>
    <property type="match status" value="1"/>
</dbReference>
<protein>
    <recommendedName>
        <fullName>Uronate isomerase</fullName>
        <ecNumber>5.3.1.12</ecNumber>
    </recommendedName>
    <alternativeName>
        <fullName>Glucuronate isomerase</fullName>
    </alternativeName>
    <alternativeName>
        <fullName>Uronic isomerase</fullName>
    </alternativeName>
</protein>